<evidence type="ECO:0000250" key="1">
    <source>
        <dbReference type="UniProtKB" id="P20062"/>
    </source>
</evidence>
<evidence type="ECO:0000255" key="2"/>
<evidence type="ECO:0000269" key="3">
    <source>
    </source>
</evidence>
<evidence type="ECO:0000269" key="4">
    <source>
    </source>
</evidence>
<evidence type="ECO:0000269" key="5">
    <source>
    </source>
</evidence>
<evidence type="ECO:0000269" key="6">
    <source>
    </source>
</evidence>
<evidence type="ECO:0000269" key="7">
    <source ref="3"/>
</evidence>
<evidence type="ECO:0000305" key="8"/>
<evidence type="ECO:0007829" key="9">
    <source>
        <dbReference type="PDB" id="2BB6"/>
    </source>
</evidence>
<evidence type="ECO:0007829" key="10">
    <source>
        <dbReference type="PDB" id="2V3P"/>
    </source>
</evidence>
<organism>
    <name type="scientific">Bos taurus</name>
    <name type="common">Bovine</name>
    <dbReference type="NCBI Taxonomy" id="9913"/>
    <lineage>
        <taxon>Eukaryota</taxon>
        <taxon>Metazoa</taxon>
        <taxon>Chordata</taxon>
        <taxon>Craniata</taxon>
        <taxon>Vertebrata</taxon>
        <taxon>Euteleostomi</taxon>
        <taxon>Mammalia</taxon>
        <taxon>Eutheria</taxon>
        <taxon>Laurasiatheria</taxon>
        <taxon>Artiodactyla</taxon>
        <taxon>Ruminantia</taxon>
        <taxon>Pecora</taxon>
        <taxon>Bovidae</taxon>
        <taxon>Bovinae</taxon>
        <taxon>Bos</taxon>
    </lineage>
</organism>
<sequence>MGHLGALLFLLGGLGALANICEITEVDSTLVERLGQRLLPWMDRLSQEQLNPSIYVGLRLSSLQAGAKEAHYLHSLKLSYQQSLLRPASNKDDNDSEAKPSMGQLALYLLALRANCEFIGGRKGDRLVSQLKRFLEDEKRAIGHNHQGHPRTSYYQYSLGILALCVHQKRVHDSVVGKLLYAVEHKPHLLQDHVSVDTMAMAGMAFSCLELSNLNPKQRNRINLALKRVQEKILKAQTPEGYFGNVYSTPLALQLLMGSLRPSVELGTACLKAKAALQASLQHKTFQNPLMISQLLPVLNQKSYVDLISPDCQAPRALLEPALETPPQAKVPKFIDVLLKVSGISPSYRHSVSVPAGSSLEDILKNAQEHGRFRFRTQASLSGPFLTSVLGRKAGEREFWQVLRDPDTPLQQGIADYRPKDGETIELRLVGW</sequence>
<gene>
    <name type="primary">TCN2</name>
</gene>
<reference key="1">
    <citation type="journal article" date="1999" name="J. Biol. Chem.">
        <title>Sequence, S-S bridges, and spectra of bovine transcobalamin expressed in Pichia pastoris.</title>
        <authorList>
            <person name="Fedosov S.N."/>
            <person name="Berglund L."/>
            <person name="Nexo E."/>
            <person name="Petersen T.E."/>
        </authorList>
    </citation>
    <scope>NUCLEOTIDE SEQUENCE [MRNA]</scope>
    <scope>PARTIAL PROTEIN SEQUENCE</scope>
    <scope>DISULFIDE BONDS</scope>
    <source>
        <tissue>Mammary gland</tissue>
        <tissue>Milk</tissue>
    </source>
</reference>
<reference key="2">
    <citation type="journal article" date="2005" name="BMC Genomics">
        <title>Characterization of 954 bovine full-CDS cDNA sequences.</title>
        <authorList>
            <person name="Harhay G.P."/>
            <person name="Sonstegard T.S."/>
            <person name="Keele J.W."/>
            <person name="Heaton M.P."/>
            <person name="Clawson M.L."/>
            <person name="Snelling W.M."/>
            <person name="Wiedmann R.T."/>
            <person name="Van Tassell C.P."/>
            <person name="Smith T.P.L."/>
        </authorList>
    </citation>
    <scope>NUCLEOTIDE SEQUENCE [LARGE SCALE MRNA]</scope>
    <scope>VARIANT PRO-47</scope>
</reference>
<reference key="3">
    <citation type="submission" date="2006-04" db="EMBL/GenBank/DDBJ databases">
        <authorList>
            <consortium name="NIH - Mammalian Gene Collection (MGC) project"/>
        </authorList>
    </citation>
    <scope>NUCLEOTIDE SEQUENCE [LARGE SCALE MRNA]</scope>
    <scope>VARIANT PRO-47</scope>
    <source>
        <strain>Hereford</strain>
        <tissue>Uterus</tissue>
    </source>
</reference>
<reference key="4">
    <citation type="journal article" date="1996" name="Biochim. Biophys. Acta">
        <title>Transcobalamin from cow milk: isolation and physico-chemical properties.</title>
        <authorList>
            <person name="Fedosov S.N."/>
            <person name="Petersen T.E."/>
            <person name="Nexo E."/>
        </authorList>
    </citation>
    <scope>PROTEIN SEQUENCE OF 19-44</scope>
    <scope>SUBCELLULAR LOCATION</scope>
    <source>
        <tissue>Milk</tissue>
    </source>
</reference>
<reference key="5">
    <citation type="journal article" date="2006" name="Proc. Natl. Acad. Sci. U.S.A.">
        <title>Structural basis for mammalian vitamin B12 transport by transcobalamin.</title>
        <authorList>
            <person name="Wuerges J."/>
            <person name="Garau G."/>
            <person name="Geremia S."/>
            <person name="Fedosov S.N."/>
            <person name="Petersen T.E."/>
            <person name="Randaccio L."/>
        </authorList>
    </citation>
    <scope>X-RAY CRYSTALLOGRAPHY (2.0 ANGSTROMS) OF 19-432 IN COMPLEX WITH COBALAMIN</scope>
    <scope>DISULFIDE BONDS</scope>
</reference>
<reference key="6">
    <citation type="journal article" date="2007" name="IUBMB Life">
        <title>Vitamin B12 transport proteins: crystallographic analysis of beta-axial ligand substitutions in cobalamin bound to transcobalamin.</title>
        <authorList>
            <person name="Wuerges J."/>
            <person name="Geremia S."/>
            <person name="Fedosov S.N."/>
            <person name="Randaccio L."/>
        </authorList>
    </citation>
    <scope>X-RAY CRYSTALLOGRAPHY (2.73 ANGSTROMS) OF 19-432 IN COMPLEX WITH COBALAMIN</scope>
    <scope>DISULFIDE BONDS</scope>
</reference>
<accession>Q9XSC9</accession>
<accession>Q0V8P0</accession>
<accession>Q1RMV8</accession>
<accession>Q58CR7</accession>
<accession>Q58DL8</accession>
<accession>Q9TR25</accession>
<comment type="function">
    <text evidence="1">Primary vitamin B12-binding and transport protein. Delivers cobalamin to cells.</text>
</comment>
<comment type="subunit">
    <text evidence="1">Interacts with CD320 (via LDL-receptor class A domains).</text>
</comment>
<comment type="subcellular location">
    <subcellularLocation>
        <location evidence="6">Secreted</location>
    </subcellularLocation>
</comment>
<comment type="tissue specificity">
    <text>Expressed in mammary gland, kidney, lymphatic nodes and liver.</text>
</comment>
<comment type="similarity">
    <text evidence="8">Belongs to the eukaryotic cobalamin transport proteins family.</text>
</comment>
<proteinExistence type="evidence at protein level"/>
<dbReference type="EMBL" id="AF121289">
    <property type="protein sequence ID" value="AAD23829.1"/>
    <property type="molecule type" value="mRNA"/>
</dbReference>
<dbReference type="EMBL" id="BT021579">
    <property type="protein sequence ID" value="AAX46426.1"/>
    <property type="molecule type" value="mRNA"/>
</dbReference>
<dbReference type="EMBL" id="BT021659">
    <property type="protein sequence ID" value="AAX46506.1"/>
    <property type="molecule type" value="mRNA"/>
</dbReference>
<dbReference type="EMBL" id="BT021880">
    <property type="protein sequence ID" value="AAX46727.1"/>
    <property type="molecule type" value="mRNA"/>
</dbReference>
<dbReference type="EMBL" id="BT021899">
    <property type="protein sequence ID" value="AAX46746.1"/>
    <property type="molecule type" value="mRNA"/>
</dbReference>
<dbReference type="EMBL" id="BT026178">
    <property type="protein sequence ID" value="ABG67017.1"/>
    <property type="molecule type" value="mRNA"/>
</dbReference>
<dbReference type="EMBL" id="BT026282">
    <property type="protein sequence ID" value="ABG81438.1"/>
    <property type="molecule type" value="mRNA"/>
</dbReference>
<dbReference type="EMBL" id="BC114678">
    <property type="protein sequence ID" value="AAI14679.1"/>
    <property type="molecule type" value="mRNA"/>
</dbReference>
<dbReference type="PIR" id="S62672">
    <property type="entry name" value="S62672"/>
</dbReference>
<dbReference type="RefSeq" id="NP_776620.2">
    <property type="nucleotide sequence ID" value="NM_174195.3"/>
</dbReference>
<dbReference type="PDB" id="2BB6">
    <property type="method" value="X-ray"/>
    <property type="resolution" value="2.00 A"/>
    <property type="chains" value="A/B/C/D=19-432"/>
</dbReference>
<dbReference type="PDB" id="2BBC">
    <property type="method" value="X-ray"/>
    <property type="resolution" value="2.40 A"/>
    <property type="chains" value="A=19-432"/>
</dbReference>
<dbReference type="PDB" id="2V3N">
    <property type="method" value="X-ray"/>
    <property type="resolution" value="2.73 A"/>
    <property type="chains" value="A=19-432"/>
</dbReference>
<dbReference type="PDB" id="2V3P">
    <property type="method" value="X-ray"/>
    <property type="resolution" value="2.90 A"/>
    <property type="chains" value="A=19-432"/>
</dbReference>
<dbReference type="PDBsum" id="2BB6"/>
<dbReference type="PDBsum" id="2BBC"/>
<dbReference type="PDBsum" id="2V3N"/>
<dbReference type="PDBsum" id="2V3P"/>
<dbReference type="SMR" id="Q9XSC9"/>
<dbReference type="FunCoup" id="Q9XSC9">
    <property type="interactions" value="396"/>
</dbReference>
<dbReference type="STRING" id="9913.ENSBTAP00000029446"/>
<dbReference type="GlyCosmos" id="Q9XSC9">
    <property type="glycosylation" value="1 site, No reported glycans"/>
</dbReference>
<dbReference type="GlyGen" id="Q9XSC9">
    <property type="glycosylation" value="1 site"/>
</dbReference>
<dbReference type="PaxDb" id="9913-ENSBTAP00000029446"/>
<dbReference type="Ensembl" id="ENSBTAT00000029446.6">
    <property type="protein sequence ID" value="ENSBTAP00000029446.4"/>
    <property type="gene ID" value="ENSBTAG00000002770.7"/>
</dbReference>
<dbReference type="GeneID" id="281518"/>
<dbReference type="KEGG" id="bta:281518"/>
<dbReference type="CTD" id="6948"/>
<dbReference type="VEuPathDB" id="HostDB:ENSBTAG00000002770"/>
<dbReference type="VGNC" id="VGNC:35699">
    <property type="gene designation" value="TCN2"/>
</dbReference>
<dbReference type="eggNOG" id="ENOG502QSED">
    <property type="taxonomic scope" value="Eukaryota"/>
</dbReference>
<dbReference type="GeneTree" id="ENSGT00530000063370"/>
<dbReference type="HOGENOM" id="CLU_052188_1_0_1"/>
<dbReference type="InParanoid" id="Q9XSC9"/>
<dbReference type="OMA" id="QCVKDSG"/>
<dbReference type="OrthoDB" id="9440006at2759"/>
<dbReference type="TreeFam" id="TF333092"/>
<dbReference type="Reactome" id="R-BTA-9758890">
    <property type="pathway name" value="Transport of RCbl within the body"/>
</dbReference>
<dbReference type="EvolutionaryTrace" id="Q9XSC9"/>
<dbReference type="Proteomes" id="UP000009136">
    <property type="component" value="Chromosome 17"/>
</dbReference>
<dbReference type="Bgee" id="ENSBTAG00000002770">
    <property type="expression patterns" value="Expressed in cortex of kidney and 107 other cell types or tissues"/>
</dbReference>
<dbReference type="GO" id="GO:0005615">
    <property type="term" value="C:extracellular space"/>
    <property type="evidence" value="ECO:0000250"/>
    <property type="project" value="UniProtKB"/>
</dbReference>
<dbReference type="GO" id="GO:0031419">
    <property type="term" value="F:cobalamin binding"/>
    <property type="evidence" value="ECO:0000314"/>
    <property type="project" value="UniProtKB"/>
</dbReference>
<dbReference type="GO" id="GO:0046872">
    <property type="term" value="F:metal ion binding"/>
    <property type="evidence" value="ECO:0007669"/>
    <property type="project" value="UniProtKB-KW"/>
</dbReference>
<dbReference type="GO" id="GO:0015889">
    <property type="term" value="P:cobalamin transport"/>
    <property type="evidence" value="ECO:0000250"/>
    <property type="project" value="UniProtKB"/>
</dbReference>
<dbReference type="GO" id="GO:0006824">
    <property type="term" value="P:cobalt ion transport"/>
    <property type="evidence" value="ECO:0007669"/>
    <property type="project" value="UniProtKB-KW"/>
</dbReference>
<dbReference type="FunFam" id="1.50.10.20:FF:000013">
    <property type="entry name" value="Transcobalamin-2"/>
    <property type="match status" value="1"/>
</dbReference>
<dbReference type="FunFam" id="2.170.130.30:FF:000002">
    <property type="entry name" value="Transcobalamin-2"/>
    <property type="match status" value="1"/>
</dbReference>
<dbReference type="Gene3D" id="1.50.10.20">
    <property type="match status" value="1"/>
</dbReference>
<dbReference type="Gene3D" id="2.170.130.30">
    <property type="match status" value="1"/>
</dbReference>
<dbReference type="InterPro" id="IPR002157">
    <property type="entry name" value="Cbl-bd_prot"/>
</dbReference>
<dbReference type="InterPro" id="IPR051588">
    <property type="entry name" value="Cobalamin_Transport"/>
</dbReference>
<dbReference type="PANTHER" id="PTHR10559">
    <property type="entry name" value="TRANSCOBALAMIN-1/GASTRIC INTRINSIC FACTOR"/>
    <property type="match status" value="1"/>
</dbReference>
<dbReference type="PANTHER" id="PTHR10559:SF14">
    <property type="entry name" value="TRANSCOBALAMIN-2"/>
    <property type="match status" value="1"/>
</dbReference>
<dbReference type="Pfam" id="PF01122">
    <property type="entry name" value="Cobalamin_bind"/>
    <property type="match status" value="1"/>
</dbReference>
<dbReference type="PROSITE" id="PS00468">
    <property type="entry name" value="COBALAMIN_BINDING"/>
    <property type="match status" value="1"/>
</dbReference>
<name>TCO2_BOVIN</name>
<protein>
    <recommendedName>
        <fullName>Transcobalamin-2</fullName>
        <shortName>TC-2</shortName>
    </recommendedName>
    <alternativeName>
        <fullName>Transcobalamin II</fullName>
        <shortName>TC II</shortName>
        <shortName>TCII</shortName>
    </alternativeName>
</protein>
<feature type="signal peptide" evidence="6">
    <location>
        <begin position="1"/>
        <end position="18"/>
    </location>
</feature>
<feature type="chain" id="PRO_0000005563" description="Transcobalamin-2">
    <location>
        <begin position="19"/>
        <end position="432"/>
    </location>
</feature>
<feature type="binding site" evidence="4 5">
    <location>
        <position position="104"/>
    </location>
    <ligand>
        <name>cob(II)alamin</name>
        <dbReference type="ChEBI" id="CHEBI:16304"/>
    </ligand>
</feature>
<feature type="binding site">
    <location>
        <begin position="152"/>
        <end position="156"/>
    </location>
    <ligand>
        <name>cob(II)alamin</name>
        <dbReference type="ChEBI" id="CHEBI:16304"/>
    </ligand>
</feature>
<feature type="binding site">
    <location>
        <begin position="193"/>
        <end position="197"/>
    </location>
    <ligand>
        <name>cob(II)alamin</name>
        <dbReference type="ChEBI" id="CHEBI:16304"/>
    </ligand>
</feature>
<feature type="binding site" description="axial binding residue">
    <location>
        <position position="193"/>
    </location>
    <ligand>
        <name>cob(II)alamin</name>
        <dbReference type="ChEBI" id="CHEBI:16304"/>
    </ligand>
    <ligandPart>
        <name>Co</name>
        <dbReference type="ChEBI" id="CHEBI:27638"/>
    </ligandPart>
</feature>
<feature type="binding site" evidence="4 5">
    <location>
        <position position="245"/>
    </location>
    <ligand>
        <name>cob(II)alamin</name>
        <dbReference type="ChEBI" id="CHEBI:16304"/>
    </ligand>
</feature>
<feature type="binding site" evidence="4 5">
    <location>
        <position position="248"/>
    </location>
    <ligand>
        <name>cob(II)alamin</name>
        <dbReference type="ChEBI" id="CHEBI:16304"/>
    </ligand>
</feature>
<feature type="binding site" evidence="4 5">
    <location>
        <position position="294"/>
    </location>
    <ligand>
        <name>cob(II)alamin</name>
        <dbReference type="ChEBI" id="CHEBI:16304"/>
    </ligand>
</feature>
<feature type="binding site">
    <location>
        <begin position="400"/>
        <end position="402"/>
    </location>
    <ligand>
        <name>cob(II)alamin</name>
        <dbReference type="ChEBI" id="CHEBI:16304"/>
    </ligand>
</feature>
<feature type="glycosylation site" description="N-linked (GlcNAc...) asparagine" evidence="2">
    <location>
        <position position="94"/>
    </location>
</feature>
<feature type="disulfide bond">
    <location>
        <begin position="21"/>
        <end position="270"/>
    </location>
</feature>
<feature type="disulfide bond">
    <location>
        <begin position="116"/>
        <end position="312"/>
    </location>
</feature>
<feature type="disulfide bond">
    <location>
        <begin position="165"/>
        <end position="208"/>
    </location>
</feature>
<feature type="sequence variant" evidence="3 7">
    <original>Q</original>
    <variation>P</variation>
    <location>
        <position position="47"/>
    </location>
</feature>
<feature type="sequence conflict" description="In Ref. 2; AAX46426." evidence="8" ref="2">
    <original>G</original>
    <variation>A</variation>
    <location>
        <position position="124"/>
    </location>
</feature>
<feature type="sequence conflict" description="In Ref. 2; ABG67017." evidence="8" ref="2">
    <original>G</original>
    <variation>S</variation>
    <location>
        <position position="413"/>
    </location>
</feature>
<feature type="helix" evidence="9">
    <location>
        <begin position="28"/>
        <end position="38"/>
    </location>
</feature>
<feature type="helix" evidence="9">
    <location>
        <begin position="39"/>
        <end position="43"/>
    </location>
</feature>
<feature type="turn" evidence="9">
    <location>
        <begin position="47"/>
        <end position="49"/>
    </location>
</feature>
<feature type="helix" evidence="9">
    <location>
        <begin position="52"/>
        <end position="59"/>
    </location>
</feature>
<feature type="strand" evidence="9">
    <location>
        <begin position="61"/>
        <end position="64"/>
    </location>
</feature>
<feature type="helix" evidence="9">
    <location>
        <begin position="68"/>
        <end position="84"/>
    </location>
</feature>
<feature type="turn" evidence="10">
    <location>
        <begin position="91"/>
        <end position="93"/>
    </location>
</feature>
<feature type="helix" evidence="9">
    <location>
        <begin position="102"/>
        <end position="114"/>
    </location>
</feature>
<feature type="helix" evidence="9">
    <location>
        <begin position="121"/>
        <end position="142"/>
    </location>
</feature>
<feature type="strand" evidence="9">
    <location>
        <begin position="144"/>
        <end position="147"/>
    </location>
</feature>
<feature type="helix" evidence="9">
    <location>
        <begin position="154"/>
        <end position="166"/>
    </location>
</feature>
<feature type="helix" evidence="9">
    <location>
        <begin position="173"/>
        <end position="184"/>
    </location>
</feature>
<feature type="strand" evidence="9">
    <location>
        <begin position="185"/>
        <end position="187"/>
    </location>
</feature>
<feature type="turn" evidence="9">
    <location>
        <begin position="192"/>
        <end position="194"/>
    </location>
</feature>
<feature type="helix" evidence="9">
    <location>
        <begin position="195"/>
        <end position="212"/>
    </location>
</feature>
<feature type="helix" evidence="9">
    <location>
        <begin position="216"/>
        <end position="218"/>
    </location>
</feature>
<feature type="helix" evidence="9">
    <location>
        <begin position="219"/>
        <end position="235"/>
    </location>
</feature>
<feature type="strand" evidence="9">
    <location>
        <begin position="243"/>
        <end position="245"/>
    </location>
</feature>
<feature type="turn" evidence="9">
    <location>
        <begin position="246"/>
        <end position="248"/>
    </location>
</feature>
<feature type="helix" evidence="9">
    <location>
        <begin position="249"/>
        <end position="256"/>
    </location>
</feature>
<feature type="helix" evidence="9">
    <location>
        <begin position="264"/>
        <end position="281"/>
    </location>
</feature>
<feature type="turn" evidence="9">
    <location>
        <begin position="282"/>
        <end position="284"/>
    </location>
</feature>
<feature type="helix" evidence="9">
    <location>
        <begin position="289"/>
        <end position="298"/>
    </location>
</feature>
<feature type="turn" evidence="9">
    <location>
        <begin position="299"/>
        <end position="301"/>
    </location>
</feature>
<feature type="helix" evidence="9">
    <location>
        <begin position="304"/>
        <end position="308"/>
    </location>
</feature>
<feature type="strand" evidence="9">
    <location>
        <begin position="312"/>
        <end position="314"/>
    </location>
</feature>
<feature type="strand" evidence="9">
    <location>
        <begin position="334"/>
        <end position="346"/>
    </location>
</feature>
<feature type="strand" evidence="9">
    <location>
        <begin position="348"/>
        <end position="355"/>
    </location>
</feature>
<feature type="helix" evidence="9">
    <location>
        <begin position="360"/>
        <end position="369"/>
    </location>
</feature>
<feature type="strand" evidence="9">
    <location>
        <begin position="370"/>
        <end position="372"/>
    </location>
</feature>
<feature type="strand" evidence="9">
    <location>
        <begin position="375"/>
        <end position="378"/>
    </location>
</feature>
<feature type="strand" evidence="9">
    <location>
        <begin position="385"/>
        <end position="389"/>
    </location>
</feature>
<feature type="strand" evidence="9">
    <location>
        <begin position="398"/>
        <end position="404"/>
    </location>
</feature>
<feature type="turn" evidence="9">
    <location>
        <begin position="405"/>
        <end position="407"/>
    </location>
</feature>
<feature type="turn" evidence="9">
    <location>
        <begin position="414"/>
        <end position="416"/>
    </location>
</feature>
<feature type="strand" evidence="9">
    <location>
        <begin position="424"/>
        <end position="431"/>
    </location>
</feature>
<keyword id="KW-0002">3D-structure</keyword>
<keyword id="KW-0170">Cobalt</keyword>
<keyword id="KW-0171">Cobalt transport</keyword>
<keyword id="KW-0903">Direct protein sequencing</keyword>
<keyword id="KW-1015">Disulfide bond</keyword>
<keyword id="KW-0325">Glycoprotein</keyword>
<keyword id="KW-0406">Ion transport</keyword>
<keyword id="KW-0479">Metal-binding</keyword>
<keyword id="KW-1185">Reference proteome</keyword>
<keyword id="KW-0964">Secreted</keyword>
<keyword id="KW-0732">Signal</keyword>
<keyword id="KW-0813">Transport</keyword>